<gene>
    <name evidence="1" type="primary">gpmA</name>
    <name type="ordered locus">Cag_0187</name>
</gene>
<reference key="1">
    <citation type="submission" date="2005-08" db="EMBL/GenBank/DDBJ databases">
        <title>Complete sequence of Chlorobium chlorochromatii CaD3.</title>
        <authorList>
            <consortium name="US DOE Joint Genome Institute"/>
            <person name="Copeland A."/>
            <person name="Lucas S."/>
            <person name="Lapidus A."/>
            <person name="Barry K."/>
            <person name="Detter J.C."/>
            <person name="Glavina T."/>
            <person name="Hammon N."/>
            <person name="Israni S."/>
            <person name="Pitluck S."/>
            <person name="Bryant D."/>
            <person name="Schmutz J."/>
            <person name="Larimer F."/>
            <person name="Land M."/>
            <person name="Kyrpides N."/>
            <person name="Ivanova N."/>
            <person name="Richardson P."/>
        </authorList>
    </citation>
    <scope>NUCLEOTIDE SEQUENCE [LARGE SCALE GENOMIC DNA]</scope>
    <source>
        <strain>CaD3</strain>
    </source>
</reference>
<accession>Q3AU60</accession>
<proteinExistence type="inferred from homology"/>
<feature type="chain" id="PRO_0000229117" description="2,3-bisphosphoglycerate-dependent phosphoglycerate mutase">
    <location>
        <begin position="1"/>
        <end position="247"/>
    </location>
</feature>
<feature type="active site" description="Tele-phosphohistidine intermediate" evidence="1">
    <location>
        <position position="9"/>
    </location>
</feature>
<feature type="active site" description="Proton donor/acceptor" evidence="1">
    <location>
        <position position="87"/>
    </location>
</feature>
<feature type="binding site" evidence="1">
    <location>
        <begin position="8"/>
        <end position="15"/>
    </location>
    <ligand>
        <name>substrate</name>
    </ligand>
</feature>
<feature type="binding site" evidence="1">
    <location>
        <begin position="21"/>
        <end position="22"/>
    </location>
    <ligand>
        <name>substrate</name>
    </ligand>
</feature>
<feature type="binding site" evidence="1">
    <location>
        <position position="60"/>
    </location>
    <ligand>
        <name>substrate</name>
    </ligand>
</feature>
<feature type="binding site" evidence="1">
    <location>
        <begin position="87"/>
        <end position="90"/>
    </location>
    <ligand>
        <name>substrate</name>
    </ligand>
</feature>
<feature type="binding site" evidence="1">
    <location>
        <position position="98"/>
    </location>
    <ligand>
        <name>substrate</name>
    </ligand>
</feature>
<feature type="binding site" evidence="1">
    <location>
        <begin position="114"/>
        <end position="115"/>
    </location>
    <ligand>
        <name>substrate</name>
    </ligand>
</feature>
<feature type="binding site" evidence="1">
    <location>
        <begin position="183"/>
        <end position="184"/>
    </location>
    <ligand>
        <name>substrate</name>
    </ligand>
</feature>
<feature type="site" description="Transition state stabilizer" evidence="1">
    <location>
        <position position="182"/>
    </location>
</feature>
<keyword id="KW-0312">Gluconeogenesis</keyword>
<keyword id="KW-0324">Glycolysis</keyword>
<keyword id="KW-0413">Isomerase</keyword>
<protein>
    <recommendedName>
        <fullName evidence="1">2,3-bisphosphoglycerate-dependent phosphoglycerate mutase</fullName>
        <shortName evidence="1">BPG-dependent PGAM</shortName>
        <shortName evidence="1">PGAM</shortName>
        <shortName evidence="1">Phosphoglyceromutase</shortName>
        <shortName evidence="1">dPGM</shortName>
        <ecNumber evidence="1">5.4.2.11</ecNumber>
    </recommendedName>
</protein>
<evidence type="ECO:0000255" key="1">
    <source>
        <dbReference type="HAMAP-Rule" id="MF_01039"/>
    </source>
</evidence>
<dbReference type="EC" id="5.4.2.11" evidence="1"/>
<dbReference type="EMBL" id="CP000108">
    <property type="protein sequence ID" value="ABB27465.1"/>
    <property type="molecule type" value="Genomic_DNA"/>
</dbReference>
<dbReference type="SMR" id="Q3AU60"/>
<dbReference type="STRING" id="340177.Cag_0187"/>
<dbReference type="KEGG" id="cch:Cag_0187"/>
<dbReference type="eggNOG" id="COG0588">
    <property type="taxonomic scope" value="Bacteria"/>
</dbReference>
<dbReference type="HOGENOM" id="CLU_033323_1_1_10"/>
<dbReference type="OrthoDB" id="9782128at2"/>
<dbReference type="UniPathway" id="UPA00109">
    <property type="reaction ID" value="UER00186"/>
</dbReference>
<dbReference type="GO" id="GO:0004619">
    <property type="term" value="F:phosphoglycerate mutase activity"/>
    <property type="evidence" value="ECO:0007669"/>
    <property type="project" value="UniProtKB-EC"/>
</dbReference>
<dbReference type="GO" id="GO:0006094">
    <property type="term" value="P:gluconeogenesis"/>
    <property type="evidence" value="ECO:0007669"/>
    <property type="project" value="UniProtKB-UniRule"/>
</dbReference>
<dbReference type="GO" id="GO:0006096">
    <property type="term" value="P:glycolytic process"/>
    <property type="evidence" value="ECO:0007669"/>
    <property type="project" value="UniProtKB-UniRule"/>
</dbReference>
<dbReference type="CDD" id="cd07067">
    <property type="entry name" value="HP_PGM_like"/>
    <property type="match status" value="1"/>
</dbReference>
<dbReference type="FunFam" id="3.40.50.1240:FF:000003">
    <property type="entry name" value="2,3-bisphosphoglycerate-dependent phosphoglycerate mutase"/>
    <property type="match status" value="1"/>
</dbReference>
<dbReference type="Gene3D" id="3.40.50.1240">
    <property type="entry name" value="Phosphoglycerate mutase-like"/>
    <property type="match status" value="1"/>
</dbReference>
<dbReference type="HAMAP" id="MF_01039">
    <property type="entry name" value="PGAM_GpmA"/>
    <property type="match status" value="1"/>
</dbReference>
<dbReference type="InterPro" id="IPR013078">
    <property type="entry name" value="His_Pase_superF_clade-1"/>
</dbReference>
<dbReference type="InterPro" id="IPR029033">
    <property type="entry name" value="His_PPase_superfam"/>
</dbReference>
<dbReference type="InterPro" id="IPR001345">
    <property type="entry name" value="PG/BPGM_mutase_AS"/>
</dbReference>
<dbReference type="InterPro" id="IPR005952">
    <property type="entry name" value="Phosphogly_mut1"/>
</dbReference>
<dbReference type="NCBIfam" id="TIGR01258">
    <property type="entry name" value="pgm_1"/>
    <property type="match status" value="1"/>
</dbReference>
<dbReference type="NCBIfam" id="NF010713">
    <property type="entry name" value="PRK14115.1"/>
    <property type="match status" value="1"/>
</dbReference>
<dbReference type="PANTHER" id="PTHR11931">
    <property type="entry name" value="PHOSPHOGLYCERATE MUTASE"/>
    <property type="match status" value="1"/>
</dbReference>
<dbReference type="Pfam" id="PF00300">
    <property type="entry name" value="His_Phos_1"/>
    <property type="match status" value="1"/>
</dbReference>
<dbReference type="PIRSF" id="PIRSF000709">
    <property type="entry name" value="6PFK_2-Ptase"/>
    <property type="match status" value="1"/>
</dbReference>
<dbReference type="SMART" id="SM00855">
    <property type="entry name" value="PGAM"/>
    <property type="match status" value="1"/>
</dbReference>
<dbReference type="SUPFAM" id="SSF53254">
    <property type="entry name" value="Phosphoglycerate mutase-like"/>
    <property type="match status" value="1"/>
</dbReference>
<dbReference type="PROSITE" id="PS00175">
    <property type="entry name" value="PG_MUTASE"/>
    <property type="match status" value="1"/>
</dbReference>
<name>GPMA_CHLCH</name>
<sequence length="247" mass="28127">MIKLVLLRHGESQWNRENRFTGWHDIDLTDQGRIEASNAGKLLRAEGFTFDIAYTSVLKRAIRTLWHVLDEMDLMWLPVTKSWRLNERHYGALQGLNKAETAQKYGEEQVLVWRRSYDTPPPALEKSDARYPGSQARYASLSEAEVPLTECLKDTVARFLPLWHETIAPEIRKGRNVIIAAHGNSIRALVKYLDNVSEDDIVGINIPTGIPLVYELDDDLKPIRSYYLGDQDALKKAQEAVAKQGKA</sequence>
<comment type="function">
    <text evidence="1">Catalyzes the interconversion of 2-phosphoglycerate and 3-phosphoglycerate.</text>
</comment>
<comment type="catalytic activity">
    <reaction evidence="1">
        <text>(2R)-2-phosphoglycerate = (2R)-3-phosphoglycerate</text>
        <dbReference type="Rhea" id="RHEA:15901"/>
        <dbReference type="ChEBI" id="CHEBI:58272"/>
        <dbReference type="ChEBI" id="CHEBI:58289"/>
        <dbReference type="EC" id="5.4.2.11"/>
    </reaction>
</comment>
<comment type="pathway">
    <text evidence="1">Carbohydrate degradation; glycolysis; pyruvate from D-glyceraldehyde 3-phosphate: step 3/5.</text>
</comment>
<comment type="similarity">
    <text evidence="1">Belongs to the phosphoglycerate mutase family. BPG-dependent PGAM subfamily.</text>
</comment>
<organism>
    <name type="scientific">Chlorobium chlorochromatii (strain CaD3)</name>
    <dbReference type="NCBI Taxonomy" id="340177"/>
    <lineage>
        <taxon>Bacteria</taxon>
        <taxon>Pseudomonadati</taxon>
        <taxon>Chlorobiota</taxon>
        <taxon>Chlorobiia</taxon>
        <taxon>Chlorobiales</taxon>
        <taxon>Chlorobiaceae</taxon>
        <taxon>Chlorobium/Pelodictyon group</taxon>
        <taxon>Chlorobium</taxon>
    </lineage>
</organism>